<comment type="function">
    <text evidence="1">Catalyzes the isomerization between 2-isopropylmalate and 3-isopropylmalate, via the formation of 2-isopropylmaleate.</text>
</comment>
<comment type="catalytic activity">
    <reaction evidence="1">
        <text>(2R,3S)-3-isopropylmalate = (2S)-2-isopropylmalate</text>
        <dbReference type="Rhea" id="RHEA:32287"/>
        <dbReference type="ChEBI" id="CHEBI:1178"/>
        <dbReference type="ChEBI" id="CHEBI:35121"/>
        <dbReference type="EC" id="4.2.1.33"/>
    </reaction>
</comment>
<comment type="cofactor">
    <cofactor evidence="1">
        <name>[4Fe-4S] cluster</name>
        <dbReference type="ChEBI" id="CHEBI:49883"/>
    </cofactor>
    <text evidence="1">Binds 1 [4Fe-4S] cluster per subunit.</text>
</comment>
<comment type="pathway">
    <text evidence="1">Amino-acid biosynthesis; L-leucine biosynthesis; L-leucine from 3-methyl-2-oxobutanoate: step 2/4.</text>
</comment>
<comment type="subunit">
    <text evidence="1">Heterodimer of LeuC and LeuD.</text>
</comment>
<comment type="similarity">
    <text evidence="1">Belongs to the aconitase/IPM isomerase family. LeuC type 1 subfamily.</text>
</comment>
<name>LEUC_LISMC</name>
<gene>
    <name evidence="1" type="primary">leuC</name>
    <name type="ordered locus">Lm4b_02001</name>
</gene>
<evidence type="ECO:0000255" key="1">
    <source>
        <dbReference type="HAMAP-Rule" id="MF_01026"/>
    </source>
</evidence>
<reference key="1">
    <citation type="journal article" date="2012" name="BMC Genomics">
        <title>Comparative genomics and transcriptomics of lineages I, II, and III strains of Listeria monocytogenes.</title>
        <authorList>
            <person name="Hain T."/>
            <person name="Ghai R."/>
            <person name="Billion A."/>
            <person name="Kuenne C.T."/>
            <person name="Steinweg C."/>
            <person name="Izar B."/>
            <person name="Mohamed W."/>
            <person name="Mraheil M."/>
            <person name="Domann E."/>
            <person name="Schaffrath S."/>
            <person name="Karst U."/>
            <person name="Goesmann A."/>
            <person name="Oehm S."/>
            <person name="Puhler A."/>
            <person name="Merkl R."/>
            <person name="Vorwerk S."/>
            <person name="Glaser P."/>
            <person name="Garrido P."/>
            <person name="Rusniok C."/>
            <person name="Buchrieser C."/>
            <person name="Goebel W."/>
            <person name="Chakraborty T."/>
        </authorList>
    </citation>
    <scope>NUCLEOTIDE SEQUENCE [LARGE SCALE GENOMIC DNA]</scope>
    <source>
        <strain>CLIP80459</strain>
    </source>
</reference>
<organism>
    <name type="scientific">Listeria monocytogenes serotype 4b (strain CLIP80459)</name>
    <dbReference type="NCBI Taxonomy" id="568819"/>
    <lineage>
        <taxon>Bacteria</taxon>
        <taxon>Bacillati</taxon>
        <taxon>Bacillota</taxon>
        <taxon>Bacilli</taxon>
        <taxon>Bacillales</taxon>
        <taxon>Listeriaceae</taxon>
        <taxon>Listeria</taxon>
    </lineage>
</organism>
<protein>
    <recommendedName>
        <fullName evidence="1">3-isopropylmalate dehydratase large subunit</fullName>
        <ecNumber evidence="1">4.2.1.33</ecNumber>
    </recommendedName>
    <alternativeName>
        <fullName evidence="1">Alpha-IPM isomerase</fullName>
        <shortName evidence="1">IPMI</shortName>
    </alternativeName>
    <alternativeName>
        <fullName evidence="1">Isopropylmalate isomerase</fullName>
    </alternativeName>
</protein>
<dbReference type="EC" id="4.2.1.33" evidence="1"/>
<dbReference type="EMBL" id="FM242711">
    <property type="protein sequence ID" value="CAS05758.1"/>
    <property type="molecule type" value="Genomic_DNA"/>
</dbReference>
<dbReference type="RefSeq" id="WP_003725878.1">
    <property type="nucleotide sequence ID" value="NC_012488.1"/>
</dbReference>
<dbReference type="SMR" id="C1KWT3"/>
<dbReference type="KEGG" id="lmc:Lm4b_02001"/>
<dbReference type="HOGENOM" id="CLU_006714_3_4_9"/>
<dbReference type="UniPathway" id="UPA00048">
    <property type="reaction ID" value="UER00071"/>
</dbReference>
<dbReference type="GO" id="GO:0003861">
    <property type="term" value="F:3-isopropylmalate dehydratase activity"/>
    <property type="evidence" value="ECO:0007669"/>
    <property type="project" value="UniProtKB-UniRule"/>
</dbReference>
<dbReference type="GO" id="GO:0051539">
    <property type="term" value="F:4 iron, 4 sulfur cluster binding"/>
    <property type="evidence" value="ECO:0007669"/>
    <property type="project" value="UniProtKB-KW"/>
</dbReference>
<dbReference type="GO" id="GO:0046872">
    <property type="term" value="F:metal ion binding"/>
    <property type="evidence" value="ECO:0007669"/>
    <property type="project" value="UniProtKB-KW"/>
</dbReference>
<dbReference type="GO" id="GO:0009098">
    <property type="term" value="P:L-leucine biosynthetic process"/>
    <property type="evidence" value="ECO:0007669"/>
    <property type="project" value="UniProtKB-UniRule"/>
</dbReference>
<dbReference type="CDD" id="cd01583">
    <property type="entry name" value="IPMI"/>
    <property type="match status" value="1"/>
</dbReference>
<dbReference type="FunFam" id="3.30.499.10:FF:000007">
    <property type="entry name" value="3-isopropylmalate dehydratase large subunit"/>
    <property type="match status" value="1"/>
</dbReference>
<dbReference type="Gene3D" id="3.30.499.10">
    <property type="entry name" value="Aconitase, domain 3"/>
    <property type="match status" value="2"/>
</dbReference>
<dbReference type="HAMAP" id="MF_01026">
    <property type="entry name" value="LeuC_type1"/>
    <property type="match status" value="1"/>
</dbReference>
<dbReference type="InterPro" id="IPR004430">
    <property type="entry name" value="3-IsopropMal_deHydase_lsu"/>
</dbReference>
<dbReference type="InterPro" id="IPR015931">
    <property type="entry name" value="Acnase/IPM_dHydase_lsu_aba_1/3"/>
</dbReference>
<dbReference type="InterPro" id="IPR001030">
    <property type="entry name" value="Acoase/IPM_deHydtase_lsu_aba"/>
</dbReference>
<dbReference type="InterPro" id="IPR018136">
    <property type="entry name" value="Aconitase_4Fe-4S_BS"/>
</dbReference>
<dbReference type="InterPro" id="IPR036008">
    <property type="entry name" value="Aconitase_4Fe-4S_dom"/>
</dbReference>
<dbReference type="InterPro" id="IPR050067">
    <property type="entry name" value="IPM_dehydratase_rel_enz"/>
</dbReference>
<dbReference type="InterPro" id="IPR033941">
    <property type="entry name" value="IPMI_cat"/>
</dbReference>
<dbReference type="NCBIfam" id="TIGR00170">
    <property type="entry name" value="leuC"/>
    <property type="match status" value="1"/>
</dbReference>
<dbReference type="NCBIfam" id="NF004016">
    <property type="entry name" value="PRK05478.1"/>
    <property type="match status" value="1"/>
</dbReference>
<dbReference type="NCBIfam" id="NF009116">
    <property type="entry name" value="PRK12466.1"/>
    <property type="match status" value="1"/>
</dbReference>
<dbReference type="PANTHER" id="PTHR43822:SF9">
    <property type="entry name" value="3-ISOPROPYLMALATE DEHYDRATASE"/>
    <property type="match status" value="1"/>
</dbReference>
<dbReference type="PANTHER" id="PTHR43822">
    <property type="entry name" value="HOMOACONITASE, MITOCHONDRIAL-RELATED"/>
    <property type="match status" value="1"/>
</dbReference>
<dbReference type="Pfam" id="PF00330">
    <property type="entry name" value="Aconitase"/>
    <property type="match status" value="1"/>
</dbReference>
<dbReference type="PRINTS" id="PR00415">
    <property type="entry name" value="ACONITASE"/>
</dbReference>
<dbReference type="SUPFAM" id="SSF53732">
    <property type="entry name" value="Aconitase iron-sulfur domain"/>
    <property type="match status" value="1"/>
</dbReference>
<dbReference type="PROSITE" id="PS00450">
    <property type="entry name" value="ACONITASE_1"/>
    <property type="match status" value="1"/>
</dbReference>
<dbReference type="PROSITE" id="PS01244">
    <property type="entry name" value="ACONITASE_2"/>
    <property type="match status" value="1"/>
</dbReference>
<sequence>MGKTLFDKLWNRHVIYGKEGEPQLLYVDLHLIHEVTSPQAFEGLRMENRPLRRPDKTFATMDHNVPTEDIFNIQDLVAKKQIEALQTNCEEFGVTLADMGSDRQGIVHMVGPETGLTQPGKVIVCGDSHTATHGAFGAIGFGIGSSEVEHVFATQTIWQQKPKSMGIEINGNLPKGVYAKDIILHLIATYGVAFGTGYAVEYYGETIRNMSMEERMTICNMAIEGGAKMGMMAPDETTFEYVRGREYAPADMDKAISDWKTLQTDPDAEYDLHIKMDASILEPYVTWGTNPEMGVPFSKAFPEIKDMNYERAYEYMGLKPGQTAEEIELGYVFIGSCTNARLSDLEEAARIVKGNKVKNNIRALVVPGSRQVRNAAESIGLDKIFIEAGFEWREPGCSMCLGMNPDQVPDGVHCASTSNRNFEGRQGKGARTHLVSPAMAAAAAINGHFIDIRKEAVISGGN</sequence>
<keyword id="KW-0004">4Fe-4S</keyword>
<keyword id="KW-0028">Amino-acid biosynthesis</keyword>
<keyword id="KW-0100">Branched-chain amino acid biosynthesis</keyword>
<keyword id="KW-0408">Iron</keyword>
<keyword id="KW-0411">Iron-sulfur</keyword>
<keyword id="KW-0432">Leucine biosynthesis</keyword>
<keyword id="KW-0456">Lyase</keyword>
<keyword id="KW-0479">Metal-binding</keyword>
<accession>C1KWT3</accession>
<proteinExistence type="inferred from homology"/>
<feature type="chain" id="PRO_1000213329" description="3-isopropylmalate dehydratase large subunit">
    <location>
        <begin position="1"/>
        <end position="462"/>
    </location>
</feature>
<feature type="binding site" evidence="1">
    <location>
        <position position="337"/>
    </location>
    <ligand>
        <name>[4Fe-4S] cluster</name>
        <dbReference type="ChEBI" id="CHEBI:49883"/>
    </ligand>
</feature>
<feature type="binding site" evidence="1">
    <location>
        <position position="397"/>
    </location>
    <ligand>
        <name>[4Fe-4S] cluster</name>
        <dbReference type="ChEBI" id="CHEBI:49883"/>
    </ligand>
</feature>
<feature type="binding site" evidence="1">
    <location>
        <position position="400"/>
    </location>
    <ligand>
        <name>[4Fe-4S] cluster</name>
        <dbReference type="ChEBI" id="CHEBI:49883"/>
    </ligand>
</feature>